<keyword id="KW-0227">DNA damage</keyword>
<keyword id="KW-0233">DNA recombination</keyword>
<keyword id="KW-0234">DNA repair</keyword>
<keyword id="KW-0235">DNA replication</keyword>
<keyword id="KW-0238">DNA-binding</keyword>
<keyword id="KW-0479">Metal-binding</keyword>
<keyword id="KW-0862">Zinc</keyword>
<keyword id="KW-0863">Zinc-finger</keyword>
<organism>
    <name type="scientific">Enterobacteria phage RB9</name>
    <name type="common">Bacteriophage RB9</name>
    <dbReference type="NCBI Taxonomy" id="69612"/>
    <lineage>
        <taxon>Viruses</taxon>
        <taxon>Duplodnaviria</taxon>
        <taxon>Heunggongvirae</taxon>
        <taxon>Uroviricota</taxon>
        <taxon>Caudoviricetes</taxon>
        <taxon>Straboviridae</taxon>
        <taxon>Tevenvirinae</taxon>
        <taxon>Tequatrovirus</taxon>
        <taxon>Tequatrovirus RB3</taxon>
    </lineage>
</organism>
<reference key="1">
    <citation type="submission" date="1997-11" db="EMBL/GenBank/DDBJ databases">
        <authorList>
            <person name="Theimer C.A."/>
            <person name="Krisch H.M."/>
            <person name="Giedroc D.P."/>
        </authorList>
    </citation>
    <scope>NUCLEOTIDE SEQUENCE [GENOMIC DNA]</scope>
</reference>
<feature type="chain" id="PRO_0000165056" description="Single-stranded DNA-binding protein">
    <location>
        <begin position="1"/>
        <end position="49" status="greater than"/>
    </location>
</feature>
<feature type="non-terminal residue">
    <location>
        <position position="49"/>
    </location>
</feature>
<protein>
    <recommendedName>
        <fullName>Single-stranded DNA-binding protein</fullName>
    </recommendedName>
    <alternativeName>
        <fullName>Gp32</fullName>
    </alternativeName>
    <alternativeName>
        <fullName>Helix-destabilizing protein</fullName>
    </alternativeName>
</protein>
<comment type="function">
    <text>Binds preferentially to single-stranded DNA and therefore, destabilizes double-stranded DNA. It is involved in DNA replication, repair and recombination. Binds ss-DNA as the replication fork advances and stimulates the replisome processivity and accuracy.</text>
</comment>
<comment type="subunit">
    <text evidence="1">Homodimer in the absence of DNA, monomer when binding DNA.</text>
</comment>
<comment type="miscellaneous">
    <text evidence="1">Interacts with the polymerase and the uvsX and uvsY proteins.</text>
</comment>
<accession>O21953</accession>
<organismHost>
    <name type="scientific">Escherichia coli</name>
    <dbReference type="NCBI Taxonomy" id="562"/>
</organismHost>
<sequence length="49" mass="5397">MFKRKSTAELAAQMAKLNGNKGFSSEDKGEWKLKLDNAGNGQAVIRFLP</sequence>
<gene>
    <name type="primary">32</name>
    <name type="synonym">ssb</name>
</gene>
<proteinExistence type="inferred from homology"/>
<name>VHED_BPR09</name>
<evidence type="ECO:0000250" key="1"/>
<dbReference type="EMBL" id="AF033326">
    <property type="protein sequence ID" value="AAB87491.1"/>
    <property type="molecule type" value="Genomic_DNA"/>
</dbReference>
<dbReference type="SMR" id="O21953"/>
<dbReference type="GO" id="GO:0003677">
    <property type="term" value="F:DNA binding"/>
    <property type="evidence" value="ECO:0007669"/>
    <property type="project" value="UniProtKB-KW"/>
</dbReference>
<dbReference type="GO" id="GO:0008270">
    <property type="term" value="F:zinc ion binding"/>
    <property type="evidence" value="ECO:0007669"/>
    <property type="project" value="UniProtKB-KW"/>
</dbReference>
<dbReference type="GO" id="GO:0006310">
    <property type="term" value="P:DNA recombination"/>
    <property type="evidence" value="ECO:0007669"/>
    <property type="project" value="UniProtKB-KW"/>
</dbReference>
<dbReference type="GO" id="GO:0006281">
    <property type="term" value="P:DNA repair"/>
    <property type="evidence" value="ECO:0007669"/>
    <property type="project" value="UniProtKB-KW"/>
</dbReference>
<dbReference type="GO" id="GO:0006260">
    <property type="term" value="P:DNA replication"/>
    <property type="evidence" value="ECO:0007669"/>
    <property type="project" value="UniProtKB-KW"/>
</dbReference>
<dbReference type="Gene3D" id="3.90.198.10">
    <property type="entry name" value="Replication Fork Single-Stranded Dna Binding Protein"/>
    <property type="match status" value="1"/>
</dbReference>
<dbReference type="InterPro" id="IPR012340">
    <property type="entry name" value="NA-bd_OB-fold"/>
</dbReference>
<dbReference type="InterPro" id="IPR044947">
    <property type="entry name" value="Phage_T4_Gp32_ssDNA-bd_sf"/>
</dbReference>
<dbReference type="SUPFAM" id="SSF50249">
    <property type="entry name" value="Nucleic acid-binding proteins"/>
    <property type="match status" value="1"/>
</dbReference>